<proteinExistence type="inferred from homology"/>
<dbReference type="EMBL" id="X76612">
    <property type="protein sequence ID" value="CAA54077.1"/>
    <property type="molecule type" value="Genomic_DNA"/>
</dbReference>
<dbReference type="EMBL" id="AP006715">
    <property type="protein sequence ID" value="BAE92349.1"/>
    <property type="molecule type" value="Genomic_DNA"/>
</dbReference>
<dbReference type="PIR" id="S46521">
    <property type="entry name" value="S46521"/>
</dbReference>
<dbReference type="RefSeq" id="YP_536906.1">
    <property type="nucleotide sequence ID" value="NC_007932.1"/>
</dbReference>
<dbReference type="SMR" id="P50254"/>
<dbReference type="GeneID" id="3978747"/>
<dbReference type="GO" id="GO:0009507">
    <property type="term" value="C:chloroplast"/>
    <property type="evidence" value="ECO:0007669"/>
    <property type="project" value="UniProtKB-SubCell"/>
</dbReference>
<dbReference type="GO" id="GO:0015035">
    <property type="term" value="F:protein-disulfide reductase activity"/>
    <property type="evidence" value="ECO:0007669"/>
    <property type="project" value="InterPro"/>
</dbReference>
<dbReference type="CDD" id="cd02947">
    <property type="entry name" value="TRX_family"/>
    <property type="match status" value="1"/>
</dbReference>
<dbReference type="FunFam" id="3.40.30.10:FF:000001">
    <property type="entry name" value="Thioredoxin"/>
    <property type="match status" value="1"/>
</dbReference>
<dbReference type="Gene3D" id="3.40.30.10">
    <property type="entry name" value="Glutaredoxin"/>
    <property type="match status" value="1"/>
</dbReference>
<dbReference type="InterPro" id="IPR005746">
    <property type="entry name" value="Thioredoxin"/>
</dbReference>
<dbReference type="InterPro" id="IPR036249">
    <property type="entry name" value="Thioredoxin-like_sf"/>
</dbReference>
<dbReference type="InterPro" id="IPR017937">
    <property type="entry name" value="Thioredoxin_CS"/>
</dbReference>
<dbReference type="InterPro" id="IPR013766">
    <property type="entry name" value="Thioredoxin_domain"/>
</dbReference>
<dbReference type="NCBIfam" id="TIGR01068">
    <property type="entry name" value="thioredoxin"/>
    <property type="match status" value="1"/>
</dbReference>
<dbReference type="PANTHER" id="PTHR45663">
    <property type="entry name" value="GEO12009P1"/>
    <property type="match status" value="1"/>
</dbReference>
<dbReference type="PANTHER" id="PTHR45663:SF11">
    <property type="entry name" value="GEO12009P1"/>
    <property type="match status" value="1"/>
</dbReference>
<dbReference type="Pfam" id="PF00085">
    <property type="entry name" value="Thioredoxin"/>
    <property type="match status" value="1"/>
</dbReference>
<dbReference type="PIRSF" id="PIRSF000077">
    <property type="entry name" value="Thioredoxin"/>
    <property type="match status" value="1"/>
</dbReference>
<dbReference type="PRINTS" id="PR00421">
    <property type="entry name" value="THIOREDOXIN"/>
</dbReference>
<dbReference type="SUPFAM" id="SSF52833">
    <property type="entry name" value="Thioredoxin-like"/>
    <property type="match status" value="1"/>
</dbReference>
<dbReference type="PROSITE" id="PS00194">
    <property type="entry name" value="THIOREDOXIN_1"/>
    <property type="match status" value="1"/>
</dbReference>
<dbReference type="PROSITE" id="PS51352">
    <property type="entry name" value="THIOREDOXIN_2"/>
    <property type="match status" value="1"/>
</dbReference>
<gene>
    <name type="primary">trxA</name>
</gene>
<organism>
    <name type="scientific">Pyropia yezoensis</name>
    <name type="common">Susabi-nori</name>
    <name type="synonym">Porphyra yezoensis</name>
    <dbReference type="NCBI Taxonomy" id="2788"/>
    <lineage>
        <taxon>Eukaryota</taxon>
        <taxon>Rhodophyta</taxon>
        <taxon>Bangiophyceae</taxon>
        <taxon>Bangiales</taxon>
        <taxon>Bangiaceae</taxon>
        <taxon>Pyropia</taxon>
    </lineage>
</organism>
<reference key="1">
    <citation type="journal article" date="1994" name="Plant Mol. Biol.">
        <title>Chloroplast encoded thioredoxin genes in the red algae Porphyra yezoensis and Griffithsia pacifica: evolutionary implications.</title>
        <authorList>
            <person name="Reynolds A.E."/>
            <person name="Chesnick J.M."/>
            <person name="Woolford J."/>
            <person name="Cattolica R.A."/>
        </authorList>
    </citation>
    <scope>NUCLEOTIDE SEQUENCE [GENOMIC DNA]</scope>
</reference>
<reference key="2">
    <citation type="submission" date="2003-11" db="EMBL/GenBank/DDBJ databases">
        <title>Whole genome sequence of Porphyra yezoensis chloroplast.</title>
        <authorList>
            <person name="Kunimoto M."/>
            <person name="Morishima K."/>
            <person name="Yoshikawa M."/>
            <person name="Fukuda S."/>
            <person name="Kobayashi T."/>
            <person name="Kobayashi M."/>
            <person name="Okazaki T."/>
            <person name="Ohara I."/>
            <person name="Nakayama I."/>
        </authorList>
    </citation>
    <scope>NUCLEOTIDE SEQUENCE [LARGE SCALE GENOMIC DNA]</scope>
    <source>
        <strain>U-51</strain>
    </source>
</reference>
<accession>P50254</accession>
<accession>Q1XDR2</accession>
<geneLocation type="chloroplast"/>
<evidence type="ECO:0000250" key="1"/>
<evidence type="ECO:0000255" key="2">
    <source>
        <dbReference type="PROSITE-ProRule" id="PRU00691"/>
    </source>
</evidence>
<evidence type="ECO:0000305" key="3"/>
<protein>
    <recommendedName>
        <fullName>Thioredoxin</fullName>
        <shortName>Trx</shortName>
    </recommendedName>
</protein>
<name>THIO_PYRYE</name>
<sequence>MSVSQVTDASFKQEVINNNLPVLVDFWAPWCGPCRMVSPVVDEIAEEYESSIKVVKINTDDNPTIAAEYGIRSIPTLMIFKAGERVDTVIGAVPKSTLASTLNKYIS</sequence>
<feature type="chain" id="PRO_0000120071" description="Thioredoxin">
    <location>
        <begin position="1"/>
        <end position="107"/>
    </location>
</feature>
<feature type="domain" description="Thioredoxin" evidence="2">
    <location>
        <begin position="2"/>
        <end position="107"/>
    </location>
</feature>
<feature type="active site" description="Nucleophile" evidence="1">
    <location>
        <position position="31"/>
    </location>
</feature>
<feature type="active site" description="Nucleophile" evidence="1">
    <location>
        <position position="34"/>
    </location>
</feature>
<feature type="site" description="Deprotonates C-terminal active site Cys" evidence="1">
    <location>
        <position position="25"/>
    </location>
</feature>
<feature type="site" description="Contributes to redox potential value" evidence="1">
    <location>
        <position position="32"/>
    </location>
</feature>
<feature type="site" description="Contributes to redox potential value" evidence="1">
    <location>
        <position position="33"/>
    </location>
</feature>
<feature type="disulfide bond" description="Redox-active" evidence="2">
    <location>
        <begin position="31"/>
        <end position="34"/>
    </location>
</feature>
<keyword id="KW-0150">Chloroplast</keyword>
<keyword id="KW-1015">Disulfide bond</keyword>
<keyword id="KW-0249">Electron transport</keyword>
<keyword id="KW-0934">Plastid</keyword>
<keyword id="KW-0676">Redox-active center</keyword>
<keyword id="KW-0813">Transport</keyword>
<comment type="function">
    <text>Participates in various redox reactions through the reversible oxidation of its active center dithiol to a disulfide and catalyzes dithiol-disulfide exchange reactions.</text>
</comment>
<comment type="subcellular location">
    <subcellularLocation>
        <location>Plastid</location>
        <location>Chloroplast</location>
    </subcellularLocation>
</comment>
<comment type="similarity">
    <text evidence="3">Belongs to the thioredoxin family.</text>
</comment>